<sequence>MRTIDKLIAPHLKLAPVLVKRAPTLTLAFDDRRKSRLAATLDSGEEVALLLPRGTVLRDGDVLVADDGGLVRVIAAPEAVLYVRAKDALTLTRAAYHLGNRHTPVEVGADYLKLEFDPVLADMLKRIGATVDQVSMPFQPESGAYGGGHKHGHDETFAEDYALAQQVFGEHHGHEHSHDHEHGHSHAAHEHSHGHDHTHGHDHDHGDHVHDESCGHGHHHHHAHR</sequence>
<protein>
    <recommendedName>
        <fullName evidence="1">Urease accessory protein UreE</fullName>
    </recommendedName>
</protein>
<evidence type="ECO:0000255" key="1">
    <source>
        <dbReference type="HAMAP-Rule" id="MF_00822"/>
    </source>
</evidence>
<evidence type="ECO:0000256" key="2">
    <source>
        <dbReference type="SAM" id="MobiDB-lite"/>
    </source>
</evidence>
<feature type="chain" id="PRO_1000083886" description="Urease accessory protein UreE">
    <location>
        <begin position="1"/>
        <end position="225"/>
    </location>
</feature>
<feature type="region of interest" description="Disordered" evidence="2">
    <location>
        <begin position="171"/>
        <end position="225"/>
    </location>
</feature>
<feature type="compositionally biased region" description="Basic and acidic residues" evidence="2">
    <location>
        <begin position="171"/>
        <end position="215"/>
    </location>
</feature>
<feature type="compositionally biased region" description="Basic residues" evidence="2">
    <location>
        <begin position="216"/>
        <end position="225"/>
    </location>
</feature>
<reference key="1">
    <citation type="journal article" date="2006" name="Proc. Natl. Acad. Sci. U.S.A.">
        <title>Burkholderia xenovorans LB400 harbors a multi-replicon, 9.73-Mbp genome shaped for versatility.</title>
        <authorList>
            <person name="Chain P.S.G."/>
            <person name="Denef V.J."/>
            <person name="Konstantinidis K.T."/>
            <person name="Vergez L.M."/>
            <person name="Agullo L."/>
            <person name="Reyes V.L."/>
            <person name="Hauser L."/>
            <person name="Cordova M."/>
            <person name="Gomez L."/>
            <person name="Gonzalez M."/>
            <person name="Land M."/>
            <person name="Lao V."/>
            <person name="Larimer F."/>
            <person name="LiPuma J.J."/>
            <person name="Mahenthiralingam E."/>
            <person name="Malfatti S.A."/>
            <person name="Marx C.J."/>
            <person name="Parnell J.J."/>
            <person name="Ramette A."/>
            <person name="Richardson P."/>
            <person name="Seeger M."/>
            <person name="Smith D."/>
            <person name="Spilker T."/>
            <person name="Sul W.J."/>
            <person name="Tsoi T.V."/>
            <person name="Ulrich L.E."/>
            <person name="Zhulin I.B."/>
            <person name="Tiedje J.M."/>
        </authorList>
    </citation>
    <scope>NUCLEOTIDE SEQUENCE [LARGE SCALE GENOMIC DNA]</scope>
    <source>
        <strain>LB400</strain>
    </source>
</reference>
<keyword id="KW-0143">Chaperone</keyword>
<keyword id="KW-0963">Cytoplasm</keyword>
<keyword id="KW-0533">Nickel</keyword>
<keyword id="KW-0996">Nickel insertion</keyword>
<keyword id="KW-1185">Reference proteome</keyword>
<gene>
    <name evidence="1" type="primary">ureE</name>
    <name type="ordered locus">Bxeno_A0756</name>
    <name type="ORF">Bxe_A3695</name>
</gene>
<comment type="function">
    <text evidence="1">Involved in urease metallocenter assembly. Binds nickel. Probably functions as a nickel donor during metallocenter assembly.</text>
</comment>
<comment type="subcellular location">
    <subcellularLocation>
        <location evidence="1">Cytoplasm</location>
    </subcellularLocation>
</comment>
<comment type="similarity">
    <text evidence="1">Belongs to the UreE family.</text>
</comment>
<accession>Q144E5</accession>
<proteinExistence type="inferred from homology"/>
<organism>
    <name type="scientific">Paraburkholderia xenovorans (strain LB400)</name>
    <dbReference type="NCBI Taxonomy" id="266265"/>
    <lineage>
        <taxon>Bacteria</taxon>
        <taxon>Pseudomonadati</taxon>
        <taxon>Pseudomonadota</taxon>
        <taxon>Betaproteobacteria</taxon>
        <taxon>Burkholderiales</taxon>
        <taxon>Burkholderiaceae</taxon>
        <taxon>Paraburkholderia</taxon>
    </lineage>
</organism>
<dbReference type="EMBL" id="CP000270">
    <property type="protein sequence ID" value="ABE29294.1"/>
    <property type="molecule type" value="Genomic_DNA"/>
</dbReference>
<dbReference type="RefSeq" id="WP_011487080.1">
    <property type="nucleotide sequence ID" value="NC_007951.1"/>
</dbReference>
<dbReference type="SMR" id="Q144E5"/>
<dbReference type="STRING" id="266265.Bxe_A3695"/>
<dbReference type="KEGG" id="bxb:DR64_1387"/>
<dbReference type="KEGG" id="bxe:Bxe_A3695"/>
<dbReference type="PATRIC" id="fig|266265.5.peg.776"/>
<dbReference type="eggNOG" id="COG2371">
    <property type="taxonomic scope" value="Bacteria"/>
</dbReference>
<dbReference type="OrthoDB" id="5421304at2"/>
<dbReference type="Proteomes" id="UP000001817">
    <property type="component" value="Chromosome 1"/>
</dbReference>
<dbReference type="GO" id="GO:0005737">
    <property type="term" value="C:cytoplasm"/>
    <property type="evidence" value="ECO:0007669"/>
    <property type="project" value="UniProtKB-SubCell"/>
</dbReference>
<dbReference type="GO" id="GO:0016151">
    <property type="term" value="F:nickel cation binding"/>
    <property type="evidence" value="ECO:0007669"/>
    <property type="project" value="UniProtKB-UniRule"/>
</dbReference>
<dbReference type="GO" id="GO:0051082">
    <property type="term" value="F:unfolded protein binding"/>
    <property type="evidence" value="ECO:0007669"/>
    <property type="project" value="UniProtKB-UniRule"/>
</dbReference>
<dbReference type="GO" id="GO:0006457">
    <property type="term" value="P:protein folding"/>
    <property type="evidence" value="ECO:0007669"/>
    <property type="project" value="InterPro"/>
</dbReference>
<dbReference type="GO" id="GO:0065003">
    <property type="term" value="P:protein-containing complex assembly"/>
    <property type="evidence" value="ECO:0007669"/>
    <property type="project" value="InterPro"/>
</dbReference>
<dbReference type="GO" id="GO:0019627">
    <property type="term" value="P:urea metabolic process"/>
    <property type="evidence" value="ECO:0007669"/>
    <property type="project" value="InterPro"/>
</dbReference>
<dbReference type="CDD" id="cd00571">
    <property type="entry name" value="UreE"/>
    <property type="match status" value="1"/>
</dbReference>
<dbReference type="Gene3D" id="2.60.260.20">
    <property type="entry name" value="Urease metallochaperone UreE, N-terminal domain"/>
    <property type="match status" value="1"/>
</dbReference>
<dbReference type="Gene3D" id="3.30.70.790">
    <property type="entry name" value="UreE, C-terminal domain"/>
    <property type="match status" value="1"/>
</dbReference>
<dbReference type="HAMAP" id="MF_00822">
    <property type="entry name" value="UreE"/>
    <property type="match status" value="1"/>
</dbReference>
<dbReference type="InterPro" id="IPR012406">
    <property type="entry name" value="UreE"/>
</dbReference>
<dbReference type="InterPro" id="IPR007864">
    <property type="entry name" value="UreE_C_dom"/>
</dbReference>
<dbReference type="InterPro" id="IPR004029">
    <property type="entry name" value="UreE_N"/>
</dbReference>
<dbReference type="InterPro" id="IPR036118">
    <property type="entry name" value="UreE_N_sf"/>
</dbReference>
<dbReference type="NCBIfam" id="NF009751">
    <property type="entry name" value="PRK13261.1-1"/>
    <property type="match status" value="1"/>
</dbReference>
<dbReference type="NCBIfam" id="NF009762">
    <property type="entry name" value="PRK13263.1"/>
    <property type="match status" value="1"/>
</dbReference>
<dbReference type="Pfam" id="PF05194">
    <property type="entry name" value="UreE_C"/>
    <property type="match status" value="1"/>
</dbReference>
<dbReference type="Pfam" id="PF02814">
    <property type="entry name" value="UreE_N"/>
    <property type="match status" value="1"/>
</dbReference>
<dbReference type="SMART" id="SM00988">
    <property type="entry name" value="UreE_N"/>
    <property type="match status" value="1"/>
</dbReference>
<dbReference type="SUPFAM" id="SSF69737">
    <property type="entry name" value="Urease metallochaperone UreE, C-terminal domain"/>
    <property type="match status" value="1"/>
</dbReference>
<dbReference type="SUPFAM" id="SSF69287">
    <property type="entry name" value="Urease metallochaperone UreE, N-terminal domain"/>
    <property type="match status" value="1"/>
</dbReference>
<name>UREE_PARXL</name>